<reference key="1">
    <citation type="journal article" date="2000" name="Mech. Dev.">
        <title>Xenopus Six1 gene is expressed in neurogenic cranial placodes and maintained in the differentiating lateral lines.</title>
        <authorList>
            <person name="Pandur P.D."/>
            <person name="Moody S.A."/>
        </authorList>
    </citation>
    <scope>NUCLEOTIDE SEQUENCE [MRNA]</scope>
</reference>
<reference key="2">
    <citation type="submission" date="2008-11" db="EMBL/GenBank/DDBJ databases">
        <authorList>
            <consortium name="NIH - Xenopus Gene Collection (XGC) project"/>
        </authorList>
    </citation>
    <scope>NUCLEOTIDE SEQUENCE [LARGE SCALE MRNA]</scope>
    <source>
        <tissue>Gastrula</tissue>
    </source>
</reference>
<reference key="3">
    <citation type="journal article" date="2004" name="Development">
        <title>Six1 promotes a placodal fate within the lateral neurogenic ectoderm by functioning as both a transcriptional activator and repressor.</title>
        <authorList>
            <person name="Brugmann S.A."/>
            <person name="Pandur P.D."/>
            <person name="Kenyon K.L."/>
            <person name="Pignoni F."/>
            <person name="Moody S.A."/>
        </authorList>
    </citation>
    <scope>FUNCTION</scope>
</reference>
<protein>
    <recommendedName>
        <fullName>Homeobox protein six1</fullName>
    </recommendedName>
    <alternativeName>
        <fullName>Sine oculis homeobox homolog 1</fullName>
    </alternativeName>
</protein>
<keyword id="KW-0010">Activator</keyword>
<keyword id="KW-0053">Apoptosis</keyword>
<keyword id="KW-0963">Cytoplasm</keyword>
<keyword id="KW-0217">Developmental protein</keyword>
<keyword id="KW-0238">DNA-binding</keyword>
<keyword id="KW-0371">Homeobox</keyword>
<keyword id="KW-0539">Nucleus</keyword>
<keyword id="KW-1185">Reference proteome</keyword>
<keyword id="KW-0678">Repressor</keyword>
<keyword id="KW-0804">Transcription</keyword>
<keyword id="KW-0805">Transcription regulation</keyword>
<gene>
    <name type="primary">six1</name>
</gene>
<feature type="chain" id="PRO_0000422775" description="Homeobox protein six1">
    <location>
        <begin position="1"/>
        <end position="284"/>
    </location>
</feature>
<feature type="DNA-binding region" description="Homeobox" evidence="2">
    <location>
        <begin position="124"/>
        <end position="183"/>
    </location>
</feature>
<feature type="region of interest" description="Disordered" evidence="3">
    <location>
        <begin position="168"/>
        <end position="230"/>
    </location>
</feature>
<feature type="compositionally biased region" description="Basic and acidic residues" evidence="3">
    <location>
        <begin position="179"/>
        <end position="190"/>
    </location>
</feature>
<feature type="compositionally biased region" description="Low complexity" evidence="3">
    <location>
        <begin position="191"/>
        <end position="202"/>
    </location>
</feature>
<sequence>MSMLPSFGFTQEQVACVCEVLQQGGNLERLGRFLWSLPACDHLHKNESVLKAKAVVAFHRGNFRELYKILESHQFSPHNHPKLQQLWLKAHYVEAEKLRGRPLGAVGKYRVRRKFPLPRTIWDGEETSYCFKEKSRGVLREWYAHNPYPSPREKRELAEATGLTTTQVSNWFKNRRQRDRAAEAKERENTENNNTSTNKQNQLSPLDGGKSLMSSSEEEFSPPQSPDQNSVLLLQGSLTHPGATSYSLSALSASQGSHGLQGHQHQLQDSLLGPLTSSLVDLGS</sequence>
<comment type="function">
    <text evidence="4">Transcription factor that is involved in the regulation of cell proliferation, apoptosis and embryonic development. Depending on context, functions as a transcriptional repressor or activator. Required for the normal formation of pre-placodal ectoderm.</text>
</comment>
<comment type="subcellular location">
    <subcellularLocation>
        <location evidence="1">Nucleus</location>
    </subcellularLocation>
    <subcellularLocation>
        <location evidence="1">Cytoplasm</location>
    </subcellularLocation>
</comment>
<comment type="developmental stage">
    <text>First detected in gastrula. Prominently expressed in all neurogenic cephalic placodes and in lateral line primordia from neurula to tadpole stages. Weakly expressed in muscle later in development.</text>
</comment>
<comment type="similarity">
    <text evidence="5">Belongs to the SIX/Sine oculis homeobox family.</text>
</comment>
<name>SIX1_XENLA</name>
<dbReference type="EMBL" id="AF279254">
    <property type="protein sequence ID" value="AAF91422.1"/>
    <property type="molecule type" value="mRNA"/>
</dbReference>
<dbReference type="EMBL" id="BC169552">
    <property type="protein sequence ID" value="AAI69552.1"/>
    <property type="molecule type" value="mRNA"/>
</dbReference>
<dbReference type="EMBL" id="BC169929">
    <property type="protein sequence ID" value="AAI69929.1"/>
    <property type="molecule type" value="mRNA"/>
</dbReference>
<dbReference type="RefSeq" id="NP_001082027.1">
    <property type="nucleotide sequence ID" value="NM_001088558.1"/>
</dbReference>
<dbReference type="SMR" id="Q9I8H0"/>
<dbReference type="GeneID" id="398185"/>
<dbReference type="KEGG" id="xla:398185"/>
<dbReference type="AGR" id="Xenbase:XB-GENE-480721"/>
<dbReference type="CTD" id="398185"/>
<dbReference type="Xenbase" id="XB-GENE-480721">
    <property type="gene designation" value="six1.L"/>
</dbReference>
<dbReference type="OMA" id="YKAHYVE"/>
<dbReference type="OrthoDB" id="3501850at2759"/>
<dbReference type="Proteomes" id="UP000186698">
    <property type="component" value="Chromosome 8L"/>
</dbReference>
<dbReference type="Bgee" id="398185">
    <property type="expression patterns" value="Expressed in internal ear and 11 other cell types or tissues"/>
</dbReference>
<dbReference type="GO" id="GO:0005737">
    <property type="term" value="C:cytoplasm"/>
    <property type="evidence" value="ECO:0007669"/>
    <property type="project" value="UniProtKB-SubCell"/>
</dbReference>
<dbReference type="GO" id="GO:0005634">
    <property type="term" value="C:nucleus"/>
    <property type="evidence" value="ECO:0000318"/>
    <property type="project" value="GO_Central"/>
</dbReference>
<dbReference type="GO" id="GO:0005667">
    <property type="term" value="C:transcription regulator complex"/>
    <property type="evidence" value="ECO:0000318"/>
    <property type="project" value="GO_Central"/>
</dbReference>
<dbReference type="GO" id="GO:0000981">
    <property type="term" value="F:DNA-binding transcription factor activity, RNA polymerase II-specific"/>
    <property type="evidence" value="ECO:0000318"/>
    <property type="project" value="GO_Central"/>
</dbReference>
<dbReference type="GO" id="GO:0000978">
    <property type="term" value="F:RNA polymerase II cis-regulatory region sequence-specific DNA binding"/>
    <property type="evidence" value="ECO:0000318"/>
    <property type="project" value="GO_Central"/>
</dbReference>
<dbReference type="GO" id="GO:0006915">
    <property type="term" value="P:apoptotic process"/>
    <property type="evidence" value="ECO:0007669"/>
    <property type="project" value="UniProtKB-KW"/>
</dbReference>
<dbReference type="GO" id="GO:1904888">
    <property type="term" value="P:cranial skeletal system development"/>
    <property type="evidence" value="ECO:0000315"/>
    <property type="project" value="Xenbase"/>
</dbReference>
<dbReference type="GO" id="GO:0006351">
    <property type="term" value="P:DNA-templated transcription"/>
    <property type="evidence" value="ECO:0000314"/>
    <property type="project" value="Xenbase"/>
</dbReference>
<dbReference type="GO" id="GO:0071696">
    <property type="term" value="P:ectodermal placode development"/>
    <property type="evidence" value="ECO:0000315"/>
    <property type="project" value="Xenbase"/>
</dbReference>
<dbReference type="GO" id="GO:0042472">
    <property type="term" value="P:inner ear morphogenesis"/>
    <property type="evidence" value="ECO:0000315"/>
    <property type="project" value="Xenbase"/>
</dbReference>
<dbReference type="GO" id="GO:0030916">
    <property type="term" value="P:otic vesicle formation"/>
    <property type="evidence" value="ECO:0000315"/>
    <property type="project" value="Xenbase"/>
</dbReference>
<dbReference type="GO" id="GO:0014857">
    <property type="term" value="P:regulation of skeletal muscle cell proliferation"/>
    <property type="evidence" value="ECO:0000318"/>
    <property type="project" value="GO_Central"/>
</dbReference>
<dbReference type="GO" id="GO:0006357">
    <property type="term" value="P:regulation of transcription by RNA polymerase II"/>
    <property type="evidence" value="ECO:0000318"/>
    <property type="project" value="GO_Central"/>
</dbReference>
<dbReference type="GO" id="GO:0048741">
    <property type="term" value="P:skeletal muscle fiber development"/>
    <property type="evidence" value="ECO:0000318"/>
    <property type="project" value="GO_Central"/>
</dbReference>
<dbReference type="CDD" id="cd00086">
    <property type="entry name" value="homeodomain"/>
    <property type="match status" value="1"/>
</dbReference>
<dbReference type="FunFam" id="1.10.10.60:FF:000063">
    <property type="entry name" value="SIX homeobox 2"/>
    <property type="match status" value="1"/>
</dbReference>
<dbReference type="Gene3D" id="1.10.10.60">
    <property type="entry name" value="Homeodomain-like"/>
    <property type="match status" value="1"/>
</dbReference>
<dbReference type="InterPro" id="IPR001356">
    <property type="entry name" value="HD"/>
</dbReference>
<dbReference type="InterPro" id="IPR017970">
    <property type="entry name" value="Homeobox_CS"/>
</dbReference>
<dbReference type="InterPro" id="IPR009057">
    <property type="entry name" value="Homeodomain-like_sf"/>
</dbReference>
<dbReference type="InterPro" id="IPR008422">
    <property type="entry name" value="KN_HD"/>
</dbReference>
<dbReference type="InterPro" id="IPR031701">
    <property type="entry name" value="SIX1_SD"/>
</dbReference>
<dbReference type="PANTHER" id="PTHR10390">
    <property type="entry name" value="HOMEOBOX PROTEIN SIX"/>
    <property type="match status" value="1"/>
</dbReference>
<dbReference type="PANTHER" id="PTHR10390:SF13">
    <property type="entry name" value="HOMEOBOX PROTEIN SIX1"/>
    <property type="match status" value="1"/>
</dbReference>
<dbReference type="Pfam" id="PF05920">
    <property type="entry name" value="Homeobox_KN"/>
    <property type="match status" value="1"/>
</dbReference>
<dbReference type="Pfam" id="PF16878">
    <property type="entry name" value="SIX1_SD"/>
    <property type="match status" value="1"/>
</dbReference>
<dbReference type="SMART" id="SM00389">
    <property type="entry name" value="HOX"/>
    <property type="match status" value="1"/>
</dbReference>
<dbReference type="SUPFAM" id="SSF46689">
    <property type="entry name" value="Homeodomain-like"/>
    <property type="match status" value="1"/>
</dbReference>
<dbReference type="PROSITE" id="PS00027">
    <property type="entry name" value="HOMEOBOX_1"/>
    <property type="match status" value="1"/>
</dbReference>
<dbReference type="PROSITE" id="PS50071">
    <property type="entry name" value="HOMEOBOX_2"/>
    <property type="match status" value="1"/>
</dbReference>
<evidence type="ECO:0000250" key="1">
    <source>
        <dbReference type="UniProtKB" id="Q15475"/>
    </source>
</evidence>
<evidence type="ECO:0000255" key="2">
    <source>
        <dbReference type="PROSITE-ProRule" id="PRU00108"/>
    </source>
</evidence>
<evidence type="ECO:0000256" key="3">
    <source>
        <dbReference type="SAM" id="MobiDB-lite"/>
    </source>
</evidence>
<evidence type="ECO:0000269" key="4">
    <source>
    </source>
</evidence>
<evidence type="ECO:0000305" key="5"/>
<accession>Q9I8H0</accession>
<organism>
    <name type="scientific">Xenopus laevis</name>
    <name type="common">African clawed frog</name>
    <dbReference type="NCBI Taxonomy" id="8355"/>
    <lineage>
        <taxon>Eukaryota</taxon>
        <taxon>Metazoa</taxon>
        <taxon>Chordata</taxon>
        <taxon>Craniata</taxon>
        <taxon>Vertebrata</taxon>
        <taxon>Euteleostomi</taxon>
        <taxon>Amphibia</taxon>
        <taxon>Batrachia</taxon>
        <taxon>Anura</taxon>
        <taxon>Pipoidea</taxon>
        <taxon>Pipidae</taxon>
        <taxon>Xenopodinae</taxon>
        <taxon>Xenopus</taxon>
        <taxon>Xenopus</taxon>
    </lineage>
</organism>
<proteinExistence type="evidence at transcript level"/>